<accession>Q62HH7</accession>
<name>CLPS_BURMA</name>
<comment type="function">
    <text evidence="1">Involved in the modulation of the specificity of the ClpAP-mediated ATP-dependent protein degradation.</text>
</comment>
<comment type="subunit">
    <text evidence="1">Binds to the N-terminal domain of the chaperone ClpA.</text>
</comment>
<comment type="similarity">
    <text evidence="1">Belongs to the ClpS family.</text>
</comment>
<feature type="chain" id="PRO_0000215694" description="ATP-dependent Clp protease adapter protein ClpS">
    <location>
        <begin position="1"/>
        <end position="104"/>
    </location>
</feature>
<gene>
    <name evidence="1" type="primary">clpS</name>
    <name type="ordered locus">BMA2280</name>
</gene>
<organism>
    <name type="scientific">Burkholderia mallei (strain ATCC 23344)</name>
    <dbReference type="NCBI Taxonomy" id="243160"/>
    <lineage>
        <taxon>Bacteria</taxon>
        <taxon>Pseudomonadati</taxon>
        <taxon>Pseudomonadota</taxon>
        <taxon>Betaproteobacteria</taxon>
        <taxon>Burkholderiales</taxon>
        <taxon>Burkholderiaceae</taxon>
        <taxon>Burkholderia</taxon>
        <taxon>pseudomallei group</taxon>
    </lineage>
</organism>
<proteinExistence type="inferred from homology"/>
<evidence type="ECO:0000255" key="1">
    <source>
        <dbReference type="HAMAP-Rule" id="MF_00302"/>
    </source>
</evidence>
<reference key="1">
    <citation type="journal article" date="2004" name="Proc. Natl. Acad. Sci. U.S.A.">
        <title>Structural flexibility in the Burkholderia mallei genome.</title>
        <authorList>
            <person name="Nierman W.C."/>
            <person name="DeShazer D."/>
            <person name="Kim H.S."/>
            <person name="Tettelin H."/>
            <person name="Nelson K.E."/>
            <person name="Feldblyum T.V."/>
            <person name="Ulrich R.L."/>
            <person name="Ronning C.M."/>
            <person name="Brinkac L.M."/>
            <person name="Daugherty S.C."/>
            <person name="Davidsen T.D."/>
            <person name="DeBoy R.T."/>
            <person name="Dimitrov G."/>
            <person name="Dodson R.J."/>
            <person name="Durkin A.S."/>
            <person name="Gwinn M.L."/>
            <person name="Haft D.H."/>
            <person name="Khouri H.M."/>
            <person name="Kolonay J.F."/>
            <person name="Madupu R."/>
            <person name="Mohammoud Y."/>
            <person name="Nelson W.C."/>
            <person name="Radune D."/>
            <person name="Romero C.M."/>
            <person name="Sarria S."/>
            <person name="Selengut J."/>
            <person name="Shamblin C."/>
            <person name="Sullivan S.A."/>
            <person name="White O."/>
            <person name="Yu Y."/>
            <person name="Zafar N."/>
            <person name="Zhou L."/>
            <person name="Fraser C.M."/>
        </authorList>
    </citation>
    <scope>NUCLEOTIDE SEQUENCE [LARGE SCALE GENOMIC DNA]</scope>
    <source>
        <strain>ATCC 23344</strain>
    </source>
</reference>
<dbReference type="EMBL" id="CP000010">
    <property type="protein sequence ID" value="AAU49863.1"/>
    <property type="molecule type" value="Genomic_DNA"/>
</dbReference>
<dbReference type="RefSeq" id="WP_004194131.1">
    <property type="nucleotide sequence ID" value="NC_006348.1"/>
</dbReference>
<dbReference type="RefSeq" id="YP_103843.1">
    <property type="nucleotide sequence ID" value="NC_006348.1"/>
</dbReference>
<dbReference type="SMR" id="Q62HH7"/>
<dbReference type="GeneID" id="93059411"/>
<dbReference type="KEGG" id="bma:BMA2280"/>
<dbReference type="PATRIC" id="fig|243160.12.peg.2347"/>
<dbReference type="eggNOG" id="COG2127">
    <property type="taxonomic scope" value="Bacteria"/>
</dbReference>
<dbReference type="HOGENOM" id="CLU_134358_0_0_4"/>
<dbReference type="Proteomes" id="UP000006693">
    <property type="component" value="Chromosome 1"/>
</dbReference>
<dbReference type="GO" id="GO:0030163">
    <property type="term" value="P:protein catabolic process"/>
    <property type="evidence" value="ECO:0007669"/>
    <property type="project" value="InterPro"/>
</dbReference>
<dbReference type="GO" id="GO:0006508">
    <property type="term" value="P:proteolysis"/>
    <property type="evidence" value="ECO:0007669"/>
    <property type="project" value="UniProtKB-UniRule"/>
</dbReference>
<dbReference type="FunFam" id="3.30.1390.10:FF:000002">
    <property type="entry name" value="ATP-dependent Clp protease adapter protein ClpS"/>
    <property type="match status" value="1"/>
</dbReference>
<dbReference type="Gene3D" id="3.30.1390.10">
    <property type="match status" value="1"/>
</dbReference>
<dbReference type="HAMAP" id="MF_00302">
    <property type="entry name" value="ClpS"/>
    <property type="match status" value="1"/>
</dbReference>
<dbReference type="InterPro" id="IPR022935">
    <property type="entry name" value="ClpS"/>
</dbReference>
<dbReference type="InterPro" id="IPR003769">
    <property type="entry name" value="ClpS_core"/>
</dbReference>
<dbReference type="InterPro" id="IPR014719">
    <property type="entry name" value="Ribosomal_bL12_C/ClpS-like"/>
</dbReference>
<dbReference type="NCBIfam" id="NF000672">
    <property type="entry name" value="PRK00033.1-5"/>
    <property type="match status" value="1"/>
</dbReference>
<dbReference type="PANTHER" id="PTHR33473:SF19">
    <property type="entry name" value="ATP-DEPENDENT CLP PROTEASE ADAPTER PROTEIN CLPS"/>
    <property type="match status" value="1"/>
</dbReference>
<dbReference type="PANTHER" id="PTHR33473">
    <property type="entry name" value="ATP-DEPENDENT CLP PROTEASE ADAPTER PROTEIN CLPS1, CHLOROPLASTIC"/>
    <property type="match status" value="1"/>
</dbReference>
<dbReference type="Pfam" id="PF02617">
    <property type="entry name" value="ClpS"/>
    <property type="match status" value="1"/>
</dbReference>
<dbReference type="SUPFAM" id="SSF54736">
    <property type="entry name" value="ClpS-like"/>
    <property type="match status" value="1"/>
</dbReference>
<sequence>MAIIPDKQDSSVLERKEQKLKPPSMYKVVLLNDDFTPMEFVVMVVQEYFKKDRETATQIMLKVHREGRGVCGVYTRDIASTKVEQVVTHARQAGHPLQCVMEEA</sequence>
<keyword id="KW-1185">Reference proteome</keyword>
<protein>
    <recommendedName>
        <fullName evidence="1">ATP-dependent Clp protease adapter protein ClpS</fullName>
    </recommendedName>
</protein>